<evidence type="ECO:0000255" key="1">
    <source>
        <dbReference type="HAMAP-Rule" id="MF_01702"/>
    </source>
</evidence>
<accession>Q9X0Y8</accession>
<sequence length="251" mass="28516">MEPIIEIENFSAYYGEKIAVKNVTMKIFKNQITAIIGPSGCGKTTLLRSINRMNDHLPGFRVEGKIYFKGQDIYDPQLDVTEYRKRVGMVFQKPTPFPMSIYDNVAFGPRIHGVKSKHILDRIVEESLKKAALWDEVKSELNKSGTRLSGGQQQRLCIARALAVEPEVILLDEPTSALDPIATQRIEKLLEELSENYTIVIVTHNIGQAIRIADYIAFMYRGELIEYGPTREIVERPKNRLTEEYLTGKIG</sequence>
<name>PSTB_THEMA</name>
<protein>
    <recommendedName>
        <fullName evidence="1">Phosphate import ATP-binding protein PstB</fullName>
        <ecNumber evidence="1">7.3.2.1</ecNumber>
    </recommendedName>
    <alternativeName>
        <fullName evidence="1">ABC phosphate transporter</fullName>
    </alternativeName>
    <alternativeName>
        <fullName evidence="1">Phosphate-transporting ATPase</fullName>
    </alternativeName>
</protein>
<keyword id="KW-0067">ATP-binding</keyword>
<keyword id="KW-0997">Cell inner membrane</keyword>
<keyword id="KW-1003">Cell membrane</keyword>
<keyword id="KW-0472">Membrane</keyword>
<keyword id="KW-0547">Nucleotide-binding</keyword>
<keyword id="KW-0592">Phosphate transport</keyword>
<keyword id="KW-1185">Reference proteome</keyword>
<keyword id="KW-1278">Translocase</keyword>
<keyword id="KW-0813">Transport</keyword>
<organism>
    <name type="scientific">Thermotoga maritima (strain ATCC 43589 / DSM 3109 / JCM 10099 / NBRC 100826 / MSB8)</name>
    <dbReference type="NCBI Taxonomy" id="243274"/>
    <lineage>
        <taxon>Bacteria</taxon>
        <taxon>Thermotogati</taxon>
        <taxon>Thermotogota</taxon>
        <taxon>Thermotogae</taxon>
        <taxon>Thermotogales</taxon>
        <taxon>Thermotogaceae</taxon>
        <taxon>Thermotoga</taxon>
    </lineage>
</organism>
<proteinExistence type="inferred from homology"/>
<comment type="function">
    <text evidence="1">Part of the ABC transporter complex PstSACB involved in phosphate import. Responsible for energy coupling to the transport system.</text>
</comment>
<comment type="catalytic activity">
    <reaction evidence="1">
        <text>phosphate(out) + ATP + H2O = ADP + 2 phosphate(in) + H(+)</text>
        <dbReference type="Rhea" id="RHEA:24440"/>
        <dbReference type="ChEBI" id="CHEBI:15377"/>
        <dbReference type="ChEBI" id="CHEBI:15378"/>
        <dbReference type="ChEBI" id="CHEBI:30616"/>
        <dbReference type="ChEBI" id="CHEBI:43474"/>
        <dbReference type="ChEBI" id="CHEBI:456216"/>
        <dbReference type="EC" id="7.3.2.1"/>
    </reaction>
</comment>
<comment type="subunit">
    <text evidence="1">The complex is composed of two ATP-binding proteins (PstB), two transmembrane proteins (PstC and PstA) and a solute-binding protein (PstS).</text>
</comment>
<comment type="subcellular location">
    <subcellularLocation>
        <location evidence="1">Cell inner membrane</location>
        <topology evidence="1">Peripheral membrane protein</topology>
    </subcellularLocation>
</comment>
<comment type="similarity">
    <text evidence="1">Belongs to the ABC transporter superfamily. Phosphate importer (TC 3.A.1.7) family.</text>
</comment>
<feature type="chain" id="PRO_0000092918" description="Phosphate import ATP-binding protein PstB">
    <location>
        <begin position="1"/>
        <end position="251"/>
    </location>
</feature>
<feature type="domain" description="ABC transporter" evidence="1">
    <location>
        <begin position="5"/>
        <end position="246"/>
    </location>
</feature>
<feature type="binding site" evidence="1">
    <location>
        <begin position="37"/>
        <end position="44"/>
    </location>
    <ligand>
        <name>ATP</name>
        <dbReference type="ChEBI" id="CHEBI:30616"/>
    </ligand>
</feature>
<reference key="1">
    <citation type="journal article" date="1999" name="Nature">
        <title>Evidence for lateral gene transfer between Archaea and Bacteria from genome sequence of Thermotoga maritima.</title>
        <authorList>
            <person name="Nelson K.E."/>
            <person name="Clayton R.A."/>
            <person name="Gill S.R."/>
            <person name="Gwinn M.L."/>
            <person name="Dodson R.J."/>
            <person name="Haft D.H."/>
            <person name="Hickey E.K."/>
            <person name="Peterson J.D."/>
            <person name="Nelson W.C."/>
            <person name="Ketchum K.A."/>
            <person name="McDonald L.A."/>
            <person name="Utterback T.R."/>
            <person name="Malek J.A."/>
            <person name="Linher K.D."/>
            <person name="Garrett M.M."/>
            <person name="Stewart A.M."/>
            <person name="Cotton M.D."/>
            <person name="Pratt M.S."/>
            <person name="Phillips C.A."/>
            <person name="Richardson D.L."/>
            <person name="Heidelberg J.F."/>
            <person name="Sutton G.G."/>
            <person name="Fleischmann R.D."/>
            <person name="Eisen J.A."/>
            <person name="White O."/>
            <person name="Salzberg S.L."/>
            <person name="Smith H.O."/>
            <person name="Venter J.C."/>
            <person name="Fraser C.M."/>
        </authorList>
    </citation>
    <scope>NUCLEOTIDE SEQUENCE [LARGE SCALE GENOMIC DNA]</scope>
    <source>
        <strain>ATCC 43589 / DSM 3109 / JCM 10099 / NBRC 100826 / MSB8</strain>
    </source>
</reference>
<dbReference type="EC" id="7.3.2.1" evidence="1"/>
<dbReference type="EMBL" id="AE000512">
    <property type="protein sequence ID" value="AAD36335.1"/>
    <property type="molecule type" value="Genomic_DNA"/>
</dbReference>
<dbReference type="PIR" id="H72275">
    <property type="entry name" value="H72275"/>
</dbReference>
<dbReference type="RefSeq" id="NP_229066.1">
    <property type="nucleotide sequence ID" value="NC_000853.1"/>
</dbReference>
<dbReference type="RefSeq" id="WP_004079999.1">
    <property type="nucleotide sequence ID" value="NZ_CP011107.1"/>
</dbReference>
<dbReference type="SMR" id="Q9X0Y8"/>
<dbReference type="FunCoup" id="Q9X0Y8">
    <property type="interactions" value="193"/>
</dbReference>
<dbReference type="STRING" id="243274.TM_1261"/>
<dbReference type="PaxDb" id="243274-THEMA_08030"/>
<dbReference type="EnsemblBacteria" id="AAD36335">
    <property type="protein sequence ID" value="AAD36335"/>
    <property type="gene ID" value="TM_1261"/>
</dbReference>
<dbReference type="KEGG" id="tma:TM1261"/>
<dbReference type="KEGG" id="tmi:THEMA_08030"/>
<dbReference type="KEGG" id="tmm:Tmari_1266"/>
<dbReference type="KEGG" id="tmw:THMA_1286"/>
<dbReference type="eggNOG" id="COG1117">
    <property type="taxonomic scope" value="Bacteria"/>
</dbReference>
<dbReference type="InParanoid" id="Q9X0Y8"/>
<dbReference type="OrthoDB" id="9802264at2"/>
<dbReference type="Proteomes" id="UP000008183">
    <property type="component" value="Chromosome"/>
</dbReference>
<dbReference type="GO" id="GO:0005886">
    <property type="term" value="C:plasma membrane"/>
    <property type="evidence" value="ECO:0007669"/>
    <property type="project" value="UniProtKB-SubCell"/>
</dbReference>
<dbReference type="GO" id="GO:0005524">
    <property type="term" value="F:ATP binding"/>
    <property type="evidence" value="ECO:0007669"/>
    <property type="project" value="UniProtKB-KW"/>
</dbReference>
<dbReference type="GO" id="GO:0016887">
    <property type="term" value="F:ATP hydrolysis activity"/>
    <property type="evidence" value="ECO:0007669"/>
    <property type="project" value="InterPro"/>
</dbReference>
<dbReference type="GO" id="GO:0015415">
    <property type="term" value="F:ATPase-coupled phosphate ion transmembrane transporter activity"/>
    <property type="evidence" value="ECO:0007669"/>
    <property type="project" value="UniProtKB-EC"/>
</dbReference>
<dbReference type="GO" id="GO:0035435">
    <property type="term" value="P:phosphate ion transmembrane transport"/>
    <property type="evidence" value="ECO:0007669"/>
    <property type="project" value="InterPro"/>
</dbReference>
<dbReference type="CDD" id="cd03260">
    <property type="entry name" value="ABC_PstB_phosphate_transporter"/>
    <property type="match status" value="1"/>
</dbReference>
<dbReference type="Gene3D" id="3.40.50.300">
    <property type="entry name" value="P-loop containing nucleotide triphosphate hydrolases"/>
    <property type="match status" value="1"/>
</dbReference>
<dbReference type="InterPro" id="IPR003593">
    <property type="entry name" value="AAA+_ATPase"/>
</dbReference>
<dbReference type="InterPro" id="IPR003439">
    <property type="entry name" value="ABC_transporter-like_ATP-bd"/>
</dbReference>
<dbReference type="InterPro" id="IPR017871">
    <property type="entry name" value="ABC_transporter-like_CS"/>
</dbReference>
<dbReference type="InterPro" id="IPR027417">
    <property type="entry name" value="P-loop_NTPase"/>
</dbReference>
<dbReference type="InterPro" id="IPR005670">
    <property type="entry name" value="PstB-like"/>
</dbReference>
<dbReference type="NCBIfam" id="TIGR00972">
    <property type="entry name" value="3a0107s01c2"/>
    <property type="match status" value="1"/>
</dbReference>
<dbReference type="PANTHER" id="PTHR43423">
    <property type="entry name" value="ABC TRANSPORTER I FAMILY MEMBER 17"/>
    <property type="match status" value="1"/>
</dbReference>
<dbReference type="PANTHER" id="PTHR43423:SF1">
    <property type="entry name" value="ABC TRANSPORTER I FAMILY MEMBER 17"/>
    <property type="match status" value="1"/>
</dbReference>
<dbReference type="Pfam" id="PF00005">
    <property type="entry name" value="ABC_tran"/>
    <property type="match status" value="1"/>
</dbReference>
<dbReference type="SMART" id="SM00382">
    <property type="entry name" value="AAA"/>
    <property type="match status" value="1"/>
</dbReference>
<dbReference type="SUPFAM" id="SSF52540">
    <property type="entry name" value="P-loop containing nucleoside triphosphate hydrolases"/>
    <property type="match status" value="1"/>
</dbReference>
<dbReference type="PROSITE" id="PS00211">
    <property type="entry name" value="ABC_TRANSPORTER_1"/>
    <property type="match status" value="1"/>
</dbReference>
<dbReference type="PROSITE" id="PS50893">
    <property type="entry name" value="ABC_TRANSPORTER_2"/>
    <property type="match status" value="1"/>
</dbReference>
<dbReference type="PROSITE" id="PS51238">
    <property type="entry name" value="PSTB"/>
    <property type="match status" value="1"/>
</dbReference>
<gene>
    <name evidence="1" type="primary">pstB</name>
    <name type="ordered locus">TM_1261</name>
</gene>